<reference key="1">
    <citation type="thesis" date="2000" institute="Cambridge University" country="United Kingdom">
        <authorList>
            <person name="Mahon P."/>
        </authorList>
    </citation>
    <scope>NUCLEOTIDE SEQUENCE [MRNA]</scope>
</reference>
<reference key="2">
    <citation type="journal article" date="2000" name="DNA Res.">
        <title>Structural analysis of Arabidopsis thaliana chromosome 3. II. Sequence features of the 4,251,695 bp regions covered by 90 P1, TAC and BAC clones.</title>
        <authorList>
            <person name="Kaneko T."/>
            <person name="Katoh T."/>
            <person name="Sato S."/>
            <person name="Nakamura Y."/>
            <person name="Asamizu E."/>
            <person name="Tabata S."/>
        </authorList>
    </citation>
    <scope>NUCLEOTIDE SEQUENCE [LARGE SCALE GENOMIC DNA]</scope>
    <source>
        <strain>cv. Columbia</strain>
    </source>
</reference>
<reference key="3">
    <citation type="journal article" date="2017" name="Plant J.">
        <title>Araport11: a complete reannotation of the Arabidopsis thaliana reference genome.</title>
        <authorList>
            <person name="Cheng C.Y."/>
            <person name="Krishnakumar V."/>
            <person name="Chan A.P."/>
            <person name="Thibaud-Nissen F."/>
            <person name="Schobel S."/>
            <person name="Town C.D."/>
        </authorList>
    </citation>
    <scope>GENOME REANNOTATION</scope>
    <source>
        <strain>cv. Columbia</strain>
    </source>
</reference>
<reference key="4">
    <citation type="journal article" date="2003" name="Science">
        <title>Empirical analysis of transcriptional activity in the Arabidopsis genome.</title>
        <authorList>
            <person name="Yamada K."/>
            <person name="Lim J."/>
            <person name="Dale J.M."/>
            <person name="Chen H."/>
            <person name="Shinn P."/>
            <person name="Palm C.J."/>
            <person name="Southwick A.M."/>
            <person name="Wu H.C."/>
            <person name="Kim C.J."/>
            <person name="Nguyen M."/>
            <person name="Pham P.K."/>
            <person name="Cheuk R.F."/>
            <person name="Karlin-Newmann G."/>
            <person name="Liu S.X."/>
            <person name="Lam B."/>
            <person name="Sakano H."/>
            <person name="Wu T."/>
            <person name="Yu G."/>
            <person name="Miranda M."/>
            <person name="Quach H.L."/>
            <person name="Tripp M."/>
            <person name="Chang C.H."/>
            <person name="Lee J.M."/>
            <person name="Toriumi M.J."/>
            <person name="Chan M.M."/>
            <person name="Tang C.C."/>
            <person name="Onodera C.S."/>
            <person name="Deng J.M."/>
            <person name="Akiyama K."/>
            <person name="Ansari Y."/>
            <person name="Arakawa T."/>
            <person name="Banh J."/>
            <person name="Banno F."/>
            <person name="Bowser L."/>
            <person name="Brooks S.Y."/>
            <person name="Carninci P."/>
            <person name="Chao Q."/>
            <person name="Choy N."/>
            <person name="Enju A."/>
            <person name="Goldsmith A.D."/>
            <person name="Gurjal M."/>
            <person name="Hansen N.F."/>
            <person name="Hayashizaki Y."/>
            <person name="Johnson-Hopson C."/>
            <person name="Hsuan V.W."/>
            <person name="Iida K."/>
            <person name="Karnes M."/>
            <person name="Khan S."/>
            <person name="Koesema E."/>
            <person name="Ishida J."/>
            <person name="Jiang P.X."/>
            <person name="Jones T."/>
            <person name="Kawai J."/>
            <person name="Kamiya A."/>
            <person name="Meyers C."/>
            <person name="Nakajima M."/>
            <person name="Narusaka M."/>
            <person name="Seki M."/>
            <person name="Sakurai T."/>
            <person name="Satou M."/>
            <person name="Tamse R."/>
            <person name="Vaysberg M."/>
            <person name="Wallender E.K."/>
            <person name="Wong C."/>
            <person name="Yamamura Y."/>
            <person name="Yuan S."/>
            <person name="Shinozaki K."/>
            <person name="Davis R.W."/>
            <person name="Theologis A."/>
            <person name="Ecker J.R."/>
        </authorList>
    </citation>
    <scope>NUCLEOTIDE SEQUENCE [LARGE SCALE MRNA]</scope>
    <source>
        <strain>cv. Columbia</strain>
    </source>
</reference>
<reference key="5">
    <citation type="submission" date="2002-03" db="EMBL/GenBank/DDBJ databases">
        <title>Full-length cDNA from Arabidopsis thaliana.</title>
        <authorList>
            <person name="Brover V.V."/>
            <person name="Troukhan M.E."/>
            <person name="Alexandrov N.A."/>
            <person name="Lu Y.-P."/>
            <person name="Flavell R.B."/>
            <person name="Feldmann K.A."/>
        </authorList>
    </citation>
    <scope>NUCLEOTIDE SEQUENCE [LARGE SCALE MRNA]</scope>
</reference>
<reference key="6">
    <citation type="journal article" date="2009" name="Proc. Natl. Acad. Sci. U.S.A.">
        <title>Specific ER quality control components required for biogenesis of the plant innate immune receptor EFR.</title>
        <authorList>
            <person name="Li J."/>
            <person name="Zhao-Hui C."/>
            <person name="Batoux M."/>
            <person name="Nekrasov V."/>
            <person name="Roux M."/>
            <person name="Chinchilla D."/>
            <person name="Zipfel C."/>
            <person name="Jones J.D."/>
        </authorList>
    </citation>
    <scope>FUNCTION</scope>
    <scope>MUTAGENESIS OF GLY-8; ARG-161 AND ALA-186</scope>
    <scope>SUBCELLULAR LOCATION</scope>
</reference>
<gene>
    <name type="primary">ERD2B</name>
    <name type="synonym">ERD2.2</name>
    <name type="ordered locus">At3g25040</name>
</gene>
<dbReference type="EMBL" id="AJ271475">
    <property type="protein sequence ID" value="CAC81064.1"/>
    <property type="molecule type" value="mRNA"/>
</dbReference>
<dbReference type="EMBL" id="AP000412">
    <property type="protein sequence ID" value="BAB01889.1"/>
    <property type="status" value="ALT_SEQ"/>
    <property type="molecule type" value="Genomic_DNA"/>
</dbReference>
<dbReference type="EMBL" id="CP002686">
    <property type="protein sequence ID" value="AEE76971.1"/>
    <property type="molecule type" value="Genomic_DNA"/>
</dbReference>
<dbReference type="EMBL" id="AY063921">
    <property type="protein sequence ID" value="AAL36277.1"/>
    <property type="molecule type" value="mRNA"/>
</dbReference>
<dbReference type="EMBL" id="AY142602">
    <property type="protein sequence ID" value="AAN13171.1"/>
    <property type="molecule type" value="mRNA"/>
</dbReference>
<dbReference type="EMBL" id="AY086280">
    <property type="protein sequence ID" value="AAM64352.1"/>
    <property type="molecule type" value="mRNA"/>
</dbReference>
<dbReference type="RefSeq" id="NP_566758.1">
    <property type="nucleotide sequence ID" value="NM_113408.4"/>
</dbReference>
<dbReference type="SMR" id="Q8VWI1"/>
<dbReference type="FunCoup" id="Q8VWI1">
    <property type="interactions" value="3490"/>
</dbReference>
<dbReference type="STRING" id="3702.Q8VWI1"/>
<dbReference type="PaxDb" id="3702-AT3G25040.1"/>
<dbReference type="ProteomicsDB" id="220668"/>
<dbReference type="EnsemblPlants" id="AT3G25040.1">
    <property type="protein sequence ID" value="AT3G25040.1"/>
    <property type="gene ID" value="AT3G25040"/>
</dbReference>
<dbReference type="GeneID" id="822095"/>
<dbReference type="Gramene" id="AT3G25040.1">
    <property type="protein sequence ID" value="AT3G25040.1"/>
    <property type="gene ID" value="AT3G25040"/>
</dbReference>
<dbReference type="KEGG" id="ath:AT3G25040"/>
<dbReference type="Araport" id="AT3G25040"/>
<dbReference type="TAIR" id="AT3G25040">
    <property type="gene designation" value="ERD2B"/>
</dbReference>
<dbReference type="eggNOG" id="KOG3106">
    <property type="taxonomic scope" value="Eukaryota"/>
</dbReference>
<dbReference type="HOGENOM" id="CLU_057784_0_0_1"/>
<dbReference type="InParanoid" id="Q8VWI1"/>
<dbReference type="OMA" id="WKSRSCE"/>
<dbReference type="PhylomeDB" id="Q8VWI1"/>
<dbReference type="PRO" id="PR:Q8VWI1"/>
<dbReference type="Proteomes" id="UP000006548">
    <property type="component" value="Chromosome 3"/>
</dbReference>
<dbReference type="ExpressionAtlas" id="Q8VWI1">
    <property type="expression patterns" value="baseline and differential"/>
</dbReference>
<dbReference type="GO" id="GO:0005789">
    <property type="term" value="C:endoplasmic reticulum membrane"/>
    <property type="evidence" value="ECO:0007669"/>
    <property type="project" value="UniProtKB-SubCell"/>
</dbReference>
<dbReference type="GO" id="GO:0005794">
    <property type="term" value="C:Golgi apparatus"/>
    <property type="evidence" value="ECO:0000314"/>
    <property type="project" value="TAIR"/>
</dbReference>
<dbReference type="GO" id="GO:0000139">
    <property type="term" value="C:Golgi membrane"/>
    <property type="evidence" value="ECO:0007669"/>
    <property type="project" value="UniProtKB-SubCell"/>
</dbReference>
<dbReference type="GO" id="GO:0046923">
    <property type="term" value="F:ER retention sequence binding"/>
    <property type="evidence" value="ECO:0007669"/>
    <property type="project" value="InterPro"/>
</dbReference>
<dbReference type="GO" id="GO:0006621">
    <property type="term" value="P:protein retention in ER lumen"/>
    <property type="evidence" value="ECO:0007669"/>
    <property type="project" value="InterPro"/>
</dbReference>
<dbReference type="GO" id="GO:0015031">
    <property type="term" value="P:protein transport"/>
    <property type="evidence" value="ECO:0007669"/>
    <property type="project" value="UniProtKB-KW"/>
</dbReference>
<dbReference type="GO" id="GO:0016192">
    <property type="term" value="P:vesicle-mediated transport"/>
    <property type="evidence" value="ECO:0007669"/>
    <property type="project" value="UniProtKB-KW"/>
</dbReference>
<dbReference type="InterPro" id="IPR000133">
    <property type="entry name" value="ER_ret_rcpt"/>
</dbReference>
<dbReference type="PANTHER" id="PTHR10585">
    <property type="entry name" value="ER LUMEN PROTEIN RETAINING RECEPTOR"/>
    <property type="match status" value="1"/>
</dbReference>
<dbReference type="Pfam" id="PF00810">
    <property type="entry name" value="ER_lumen_recept"/>
    <property type="match status" value="1"/>
</dbReference>
<dbReference type="PRINTS" id="PR00660">
    <property type="entry name" value="ERLUMENR"/>
</dbReference>
<dbReference type="PROSITE" id="PS00951">
    <property type="entry name" value="ER_LUMEN_RECEPTOR_1"/>
    <property type="match status" value="1"/>
</dbReference>
<dbReference type="PROSITE" id="PS00952">
    <property type="entry name" value="ER_LUMEN_RECEPTOR_2"/>
    <property type="match status" value="1"/>
</dbReference>
<keyword id="KW-0256">Endoplasmic reticulum</keyword>
<keyword id="KW-0931">ER-Golgi transport</keyword>
<keyword id="KW-0333">Golgi apparatus</keyword>
<keyword id="KW-0472">Membrane</keyword>
<keyword id="KW-0653">Protein transport</keyword>
<keyword id="KW-0675">Receptor</keyword>
<keyword id="KW-1185">Reference proteome</keyword>
<keyword id="KW-0812">Transmembrane</keyword>
<keyword id="KW-1133">Transmembrane helix</keyword>
<keyword id="KW-0813">Transport</keyword>
<comment type="function">
    <text evidence="2">Determines the specificity of the luminal endoplasmic reticulum protein retention system. Required for the retro-transport of calreticulin-3 (CRT3) from the Golgi to the ER. Specifically required for elongation factor Tu receptor (EFR) function in response to the pathogen-associated molecular pattern (PAMP) elf18.</text>
</comment>
<comment type="subcellular location">
    <subcellularLocation>
        <location evidence="2">Golgi apparatus membrane</location>
        <topology evidence="2">Multi-pass membrane protein</topology>
    </subcellularLocation>
    <subcellularLocation>
        <location evidence="4">Endoplasmic reticulum membrane</location>
        <topology evidence="4">Multi-pass membrane protein</topology>
    </subcellularLocation>
</comment>
<comment type="similarity">
    <text evidence="3">Belongs to the ERD2 family.</text>
</comment>
<comment type="sequence caution" evidence="3">
    <conflict type="erroneous gene model prediction">
        <sequence resource="EMBL-CDS" id="BAB01889"/>
    </conflict>
</comment>
<sequence>MNIFRLAGDMTHLASVLVLLLKIHTIKSCAGVSLKTQELYAIVFATRYLDIFTSFVSLYNTSMKLVFLGSSFSIVWYMKYHKAVHRTYDREQDTFRHWFLVLPCFLLALLIHEKFTFLEVLWTSSLYLEAVAILPQLVLLQRTRNIDNLTGQYIFLLGGYRGLYILNWIYRYFTEPHFVHWITWIAGFVQTLLYADFFYYYFLSWKNNKKLQLPA</sequence>
<evidence type="ECO:0000255" key="1"/>
<evidence type="ECO:0000269" key="2">
    <source>
    </source>
</evidence>
<evidence type="ECO:0000305" key="3"/>
<evidence type="ECO:0000305" key="4">
    <source>
    </source>
</evidence>
<name>ERD2B_ARATH</name>
<feature type="chain" id="PRO_0000429318" description="ER lumen protein-retaining receptor B">
    <location>
        <begin position="1"/>
        <end position="215"/>
    </location>
</feature>
<feature type="transmembrane region" description="Helical" evidence="1">
    <location>
        <begin position="6"/>
        <end position="26"/>
    </location>
</feature>
<feature type="transmembrane region" description="Helical" evidence="1">
    <location>
        <begin position="55"/>
        <end position="77"/>
    </location>
</feature>
<feature type="transmembrane region" description="Helical" evidence="1">
    <location>
        <begin position="98"/>
        <end position="118"/>
    </location>
</feature>
<feature type="transmembrane region" description="Helical" evidence="1">
    <location>
        <begin position="120"/>
        <end position="140"/>
    </location>
</feature>
<feature type="transmembrane region" description="Helical" evidence="1">
    <location>
        <begin position="149"/>
        <end position="169"/>
    </location>
</feature>
<feature type="transmembrane region" description="Helical" evidence="1">
    <location>
        <begin position="178"/>
        <end position="198"/>
    </location>
</feature>
<feature type="mutagenesis site" description="In erd2b-1; strongly reduced response to the PAMP elf18, but no effect on the response to PAMP flg22." evidence="2">
    <original>G</original>
    <variation>D</variation>
    <location>
        <position position="8"/>
    </location>
</feature>
<feature type="mutagenesis site" description="In erd2b-4; strongly reduced response to the PAMP elf18, but no effect on the response to PAMP flg22." evidence="2">
    <original>R</original>
    <variation>H</variation>
    <location>
        <position position="161"/>
    </location>
</feature>
<feature type="mutagenesis site" description="In erd2b-5; strongly reduced response to the PAMP elf18, but no effect on the response to PAMP flg22." evidence="2">
    <original>A</original>
    <variation>V</variation>
    <location>
        <position position="186"/>
    </location>
</feature>
<feature type="sequence conflict" description="In Ref. 5; AAM64352." evidence="3" ref="5">
    <original>S</original>
    <variation>F</variation>
    <location>
        <position position="124"/>
    </location>
</feature>
<proteinExistence type="evidence at protein level"/>
<organism>
    <name type="scientific">Arabidopsis thaliana</name>
    <name type="common">Mouse-ear cress</name>
    <dbReference type="NCBI Taxonomy" id="3702"/>
    <lineage>
        <taxon>Eukaryota</taxon>
        <taxon>Viridiplantae</taxon>
        <taxon>Streptophyta</taxon>
        <taxon>Embryophyta</taxon>
        <taxon>Tracheophyta</taxon>
        <taxon>Spermatophyta</taxon>
        <taxon>Magnoliopsida</taxon>
        <taxon>eudicotyledons</taxon>
        <taxon>Gunneridae</taxon>
        <taxon>Pentapetalae</taxon>
        <taxon>rosids</taxon>
        <taxon>malvids</taxon>
        <taxon>Brassicales</taxon>
        <taxon>Brassicaceae</taxon>
        <taxon>Camelineae</taxon>
        <taxon>Arabidopsis</taxon>
    </lineage>
</organism>
<accession>Q8VWI1</accession>
<accession>Q8LD09</accession>
<accession>Q9LJR8</accession>
<protein>
    <recommendedName>
        <fullName>ER lumen protein-retaining receptor B</fullName>
    </recommendedName>
</protein>